<proteinExistence type="inferred from homology"/>
<sequence>MERLKAVEEKWQERWREARLFEADPQPGRRKFFITFPYPYVNAYPHLGSAFTILRVDIMARYKRMRGYNVLFPQGWHATGGPIVSSALRVREGDPRIIKTLRDMGIPEEDIPRFRDPRYWVEFFTKAWRRDLERYGMSIDWRREFYTTSLNPAYSRFIEWQYLKLREKGFVGKGRHPVVWCPKEQKVVGDHDRPDEYAGISPQEAVIIKFRGRDGLVYPALTYRPETVFGVTNLWVHPDATYLVAEVDGEERWIIGEQAARELADQGHRVVILERIEGRRLLGRIVVNPADGREVPVLPASFVRPDLGTGVVMSVPAHAPYDYVALMELKRRPETLREYGLEPGVVESLEPIQLIAVPRAEGLLVVEEVRRRGVESQMDREKLDEATREVYAREFYEGIMLETTGRFSGLKVAEAKEKVVEWLEERGAALRIYTLPQEVYCRCGARTHVKIVEDQWFLLYSKPEWKALAREAVARMEFLPGHVRRDFEAIIEALRDWAFTHKGELGTPLPWDREWVIESLSDSTIYMAYYTIAKYTQHPEKYGVEPEMLTPEVFDYVFLGAGDPGEVSRRSGIPQGLLEEMRREFLYWYPLDMRISGKDLIPNHLVFFIFHHTAIFPRELWPRAIGVNGWVLVAGEKMSKSKGNFILLRQALDWWGADATRWAEVLAGADSGLDDANFEPSVADSAVSLLSQWLDFVRENYGRPARREERWVDRWFESRLNSTIARVTRLMEEANFKTALVEAWYKLQESYRWYLRRSGGEPREDLLRRFIEVQTLLIAPFAPHTAEEAWEAMGREGFASTASWPEPDESKISPEVEAAEETVQAVLEDAREVLSLIGGADTLVVTVAAEWKYRAVEAVRRARERGASMKEALREAFKVEGVDKREAARLVQQLSRAPEVLRRAAPRSVELEALRDAAQLLQEELGVKVVVETEEDGGSPRRANALPGRPALYAEKRGG</sequence>
<gene>
    <name evidence="1" type="primary">leuS</name>
    <name type="ordered locus">APE_1015</name>
</gene>
<accession>Q9YD97</accession>
<organism>
    <name type="scientific">Aeropyrum pernix (strain ATCC 700893 / DSM 11879 / JCM 9820 / NBRC 100138 / K1)</name>
    <dbReference type="NCBI Taxonomy" id="272557"/>
    <lineage>
        <taxon>Archaea</taxon>
        <taxon>Thermoproteota</taxon>
        <taxon>Thermoprotei</taxon>
        <taxon>Desulfurococcales</taxon>
        <taxon>Desulfurococcaceae</taxon>
        <taxon>Aeropyrum</taxon>
    </lineage>
</organism>
<feature type="chain" id="PRO_0000152127" description="Leucine--tRNA ligase">
    <location>
        <begin position="1"/>
        <end position="959"/>
    </location>
</feature>
<feature type="region of interest" description="Disordered" evidence="2">
    <location>
        <begin position="933"/>
        <end position="959"/>
    </location>
</feature>
<feature type="short sequence motif" description="'HIGH' region">
    <location>
        <begin position="39"/>
        <end position="49"/>
    </location>
</feature>
<feature type="short sequence motif" description="'KMSKS' region">
    <location>
        <begin position="637"/>
        <end position="641"/>
    </location>
</feature>
<feature type="binding site" evidence="1">
    <location>
        <position position="640"/>
    </location>
    <ligand>
        <name>ATP</name>
        <dbReference type="ChEBI" id="CHEBI:30616"/>
    </ligand>
</feature>
<protein>
    <recommendedName>
        <fullName evidence="1">Leucine--tRNA ligase</fullName>
        <ecNumber evidence="1">6.1.1.4</ecNumber>
    </recommendedName>
    <alternativeName>
        <fullName evidence="1">Leucyl-tRNA synthetase</fullName>
        <shortName evidence="1">LeuRS</shortName>
    </alternativeName>
</protein>
<reference key="1">
    <citation type="journal article" date="1999" name="DNA Res.">
        <title>Complete genome sequence of an aerobic hyper-thermophilic crenarchaeon, Aeropyrum pernix K1.</title>
        <authorList>
            <person name="Kawarabayasi Y."/>
            <person name="Hino Y."/>
            <person name="Horikawa H."/>
            <person name="Yamazaki S."/>
            <person name="Haikawa Y."/>
            <person name="Jin-no K."/>
            <person name="Takahashi M."/>
            <person name="Sekine M."/>
            <person name="Baba S."/>
            <person name="Ankai A."/>
            <person name="Kosugi H."/>
            <person name="Hosoyama A."/>
            <person name="Fukui S."/>
            <person name="Nagai Y."/>
            <person name="Nishijima K."/>
            <person name="Nakazawa H."/>
            <person name="Takamiya M."/>
            <person name="Masuda S."/>
            <person name="Funahashi T."/>
            <person name="Tanaka T."/>
            <person name="Kudoh Y."/>
            <person name="Yamazaki J."/>
            <person name="Kushida N."/>
            <person name="Oguchi A."/>
            <person name="Aoki K."/>
            <person name="Kubota K."/>
            <person name="Nakamura Y."/>
            <person name="Nomura N."/>
            <person name="Sako Y."/>
            <person name="Kikuchi H."/>
        </authorList>
    </citation>
    <scope>NUCLEOTIDE SEQUENCE [LARGE SCALE GENOMIC DNA]</scope>
    <source>
        <strain>ATCC 700893 / DSM 11879 / JCM 9820 / NBRC 100138 / K1</strain>
    </source>
</reference>
<name>SYL_AERPE</name>
<comment type="catalytic activity">
    <reaction evidence="1">
        <text>tRNA(Leu) + L-leucine + ATP = L-leucyl-tRNA(Leu) + AMP + diphosphate</text>
        <dbReference type="Rhea" id="RHEA:11688"/>
        <dbReference type="Rhea" id="RHEA-COMP:9613"/>
        <dbReference type="Rhea" id="RHEA-COMP:9622"/>
        <dbReference type="ChEBI" id="CHEBI:30616"/>
        <dbReference type="ChEBI" id="CHEBI:33019"/>
        <dbReference type="ChEBI" id="CHEBI:57427"/>
        <dbReference type="ChEBI" id="CHEBI:78442"/>
        <dbReference type="ChEBI" id="CHEBI:78494"/>
        <dbReference type="ChEBI" id="CHEBI:456215"/>
        <dbReference type="EC" id="6.1.1.4"/>
    </reaction>
</comment>
<comment type="subcellular location">
    <subcellularLocation>
        <location evidence="1">Cytoplasm</location>
    </subcellularLocation>
</comment>
<comment type="similarity">
    <text evidence="1">Belongs to the class-I aminoacyl-tRNA synthetase family.</text>
</comment>
<keyword id="KW-0030">Aminoacyl-tRNA synthetase</keyword>
<keyword id="KW-0067">ATP-binding</keyword>
<keyword id="KW-0963">Cytoplasm</keyword>
<keyword id="KW-0436">Ligase</keyword>
<keyword id="KW-0547">Nucleotide-binding</keyword>
<keyword id="KW-0648">Protein biosynthesis</keyword>
<keyword id="KW-1185">Reference proteome</keyword>
<dbReference type="EC" id="6.1.1.4" evidence="1"/>
<dbReference type="EMBL" id="BA000002">
    <property type="protein sequence ID" value="BAA80000.1"/>
    <property type="molecule type" value="Genomic_DNA"/>
</dbReference>
<dbReference type="PIR" id="H72699">
    <property type="entry name" value="H72699"/>
</dbReference>
<dbReference type="SMR" id="Q9YD97"/>
<dbReference type="STRING" id="272557.APE_1015"/>
<dbReference type="EnsemblBacteria" id="BAA80000">
    <property type="protein sequence ID" value="BAA80000"/>
    <property type="gene ID" value="APE_1015"/>
</dbReference>
<dbReference type="KEGG" id="ape:APE_1015"/>
<dbReference type="PATRIC" id="fig|272557.25.peg.731"/>
<dbReference type="eggNOG" id="arCOG00809">
    <property type="taxonomic scope" value="Archaea"/>
</dbReference>
<dbReference type="Proteomes" id="UP000002518">
    <property type="component" value="Chromosome"/>
</dbReference>
<dbReference type="GO" id="GO:0005737">
    <property type="term" value="C:cytoplasm"/>
    <property type="evidence" value="ECO:0007669"/>
    <property type="project" value="UniProtKB-SubCell"/>
</dbReference>
<dbReference type="GO" id="GO:0002161">
    <property type="term" value="F:aminoacyl-tRNA deacylase activity"/>
    <property type="evidence" value="ECO:0007669"/>
    <property type="project" value="InterPro"/>
</dbReference>
<dbReference type="GO" id="GO:0005524">
    <property type="term" value="F:ATP binding"/>
    <property type="evidence" value="ECO:0007669"/>
    <property type="project" value="UniProtKB-UniRule"/>
</dbReference>
<dbReference type="GO" id="GO:0004823">
    <property type="term" value="F:leucine-tRNA ligase activity"/>
    <property type="evidence" value="ECO:0007669"/>
    <property type="project" value="UniProtKB-UniRule"/>
</dbReference>
<dbReference type="GO" id="GO:0006429">
    <property type="term" value="P:leucyl-tRNA aminoacylation"/>
    <property type="evidence" value="ECO:0007669"/>
    <property type="project" value="UniProtKB-UniRule"/>
</dbReference>
<dbReference type="CDD" id="cd07959">
    <property type="entry name" value="Anticodon_Ia_Leu_AEc"/>
    <property type="match status" value="1"/>
</dbReference>
<dbReference type="CDD" id="cd00812">
    <property type="entry name" value="LeuRS_core"/>
    <property type="match status" value="1"/>
</dbReference>
<dbReference type="Gene3D" id="3.30.2320.20">
    <property type="entry name" value="Class I aminoacyl-tRNA synthetases (RS)"/>
    <property type="match status" value="1"/>
</dbReference>
<dbReference type="Gene3D" id="3.40.50.620">
    <property type="entry name" value="HUPs"/>
    <property type="match status" value="1"/>
</dbReference>
<dbReference type="Gene3D" id="1.10.730.10">
    <property type="entry name" value="Isoleucyl-tRNA Synthetase, Domain 1"/>
    <property type="match status" value="1"/>
</dbReference>
<dbReference type="Gene3D" id="1.10.10.720">
    <property type="entry name" value="leucyl-tRNA synthetase"/>
    <property type="match status" value="1"/>
</dbReference>
<dbReference type="Gene3D" id="3.90.740.10">
    <property type="entry name" value="Valyl/Leucyl/Isoleucyl-tRNA synthetase, editing domain"/>
    <property type="match status" value="1"/>
</dbReference>
<dbReference type="HAMAP" id="MF_00049_A">
    <property type="entry name" value="Leu_tRNA_synth_A"/>
    <property type="match status" value="1"/>
</dbReference>
<dbReference type="InterPro" id="IPR002300">
    <property type="entry name" value="aa-tRNA-synth_Ia"/>
</dbReference>
<dbReference type="InterPro" id="IPR020791">
    <property type="entry name" value="Leu-tRNA-lgase_arc"/>
</dbReference>
<dbReference type="InterPro" id="IPR004493">
    <property type="entry name" value="Leu-tRNA-synth_Ia_arc/euk"/>
</dbReference>
<dbReference type="InterPro" id="IPR013155">
    <property type="entry name" value="M/V/L/I-tRNA-synth_anticd-bd"/>
</dbReference>
<dbReference type="InterPro" id="IPR014729">
    <property type="entry name" value="Rossmann-like_a/b/a_fold"/>
</dbReference>
<dbReference type="InterPro" id="IPR009080">
    <property type="entry name" value="tRNAsynth_Ia_anticodon-bd"/>
</dbReference>
<dbReference type="InterPro" id="IPR009008">
    <property type="entry name" value="Val/Leu/Ile-tRNA-synth_edit"/>
</dbReference>
<dbReference type="NCBIfam" id="TIGR00395">
    <property type="entry name" value="leuS_arch"/>
    <property type="match status" value="1"/>
</dbReference>
<dbReference type="NCBIfam" id="NF008957">
    <property type="entry name" value="PRK12300.1"/>
    <property type="match status" value="1"/>
</dbReference>
<dbReference type="PANTHER" id="PTHR45794:SF1">
    <property type="entry name" value="LEUCINE--TRNA LIGASE, CYTOPLASMIC"/>
    <property type="match status" value="1"/>
</dbReference>
<dbReference type="PANTHER" id="PTHR45794">
    <property type="entry name" value="LEUCYL-TRNA SYNTHETASE"/>
    <property type="match status" value="1"/>
</dbReference>
<dbReference type="Pfam" id="PF08264">
    <property type="entry name" value="Anticodon_1"/>
    <property type="match status" value="1"/>
</dbReference>
<dbReference type="Pfam" id="PF00133">
    <property type="entry name" value="tRNA-synt_1"/>
    <property type="match status" value="1"/>
</dbReference>
<dbReference type="SUPFAM" id="SSF47323">
    <property type="entry name" value="Anticodon-binding domain of a subclass of class I aminoacyl-tRNA synthetases"/>
    <property type="match status" value="1"/>
</dbReference>
<dbReference type="SUPFAM" id="SSF52374">
    <property type="entry name" value="Nucleotidylyl transferase"/>
    <property type="match status" value="1"/>
</dbReference>
<dbReference type="SUPFAM" id="SSF50677">
    <property type="entry name" value="ValRS/IleRS/LeuRS editing domain"/>
    <property type="match status" value="1"/>
</dbReference>
<evidence type="ECO:0000255" key="1">
    <source>
        <dbReference type="HAMAP-Rule" id="MF_00049"/>
    </source>
</evidence>
<evidence type="ECO:0000256" key="2">
    <source>
        <dbReference type="SAM" id="MobiDB-lite"/>
    </source>
</evidence>